<feature type="chain" id="PRO_0000447702" description="Cyclic dipurine nucleotide synthase">
    <location>
        <begin position="1"/>
        <end position="292"/>
    </location>
</feature>
<feature type="binding site" evidence="1">
    <location>
        <position position="47"/>
    </location>
    <ligand>
        <name>ATP</name>
        <dbReference type="ChEBI" id="CHEBI:30616"/>
    </ligand>
</feature>
<feature type="binding site" evidence="1">
    <location>
        <begin position="48"/>
        <end position="52"/>
    </location>
    <ligand>
        <name>GTP</name>
        <dbReference type="ChEBI" id="CHEBI:37565"/>
    </ligand>
</feature>
<feature type="binding site" evidence="1">
    <location>
        <position position="61"/>
    </location>
    <ligand>
        <name>Mg(2+)</name>
        <dbReference type="ChEBI" id="CHEBI:18420"/>
    </ligand>
</feature>
<feature type="binding site" evidence="1">
    <location>
        <position position="63"/>
    </location>
    <ligand>
        <name>ATP</name>
        <dbReference type="ChEBI" id="CHEBI:30616"/>
    </ligand>
</feature>
<feature type="binding site" evidence="1">
    <location>
        <position position="63"/>
    </location>
    <ligand>
        <name>Mg(2+)</name>
        <dbReference type="ChEBI" id="CHEBI:18420"/>
    </ligand>
</feature>
<feature type="binding site" evidence="1">
    <location>
        <begin position="121"/>
        <end position="122"/>
    </location>
    <ligand>
        <name>ATP</name>
        <dbReference type="ChEBI" id="CHEBI:30616"/>
    </ligand>
</feature>
<feature type="binding site" evidence="1">
    <location>
        <position position="136"/>
    </location>
    <ligand>
        <name>ATP</name>
        <dbReference type="ChEBI" id="CHEBI:30616"/>
    </ligand>
</feature>
<feature type="binding site" evidence="1">
    <location>
        <position position="136"/>
    </location>
    <ligand>
        <name>Mg(2+)</name>
        <dbReference type="ChEBI" id="CHEBI:18420"/>
    </ligand>
</feature>
<feature type="binding site" evidence="1">
    <location>
        <position position="197"/>
    </location>
    <ligand>
        <name>GTP</name>
        <dbReference type="ChEBI" id="CHEBI:37565"/>
    </ligand>
</feature>
<feature type="binding site" evidence="1">
    <location>
        <position position="216"/>
    </location>
    <ligand>
        <name>GTP</name>
        <dbReference type="ChEBI" id="CHEBI:37565"/>
    </ligand>
</feature>
<feature type="mutagenesis site" description="Changes substrate specificity, loses preference for producing cyclic dipurine molecules and instead produces more pyrimidine-containing CDN products." evidence="1">
    <original>S</original>
    <variation>N</variation>
    <location>
        <position position="169"/>
    </location>
</feature>
<feature type="helix" evidence="10">
    <location>
        <begin position="5"/>
        <end position="11"/>
    </location>
</feature>
<feature type="helix" evidence="10">
    <location>
        <begin position="21"/>
        <end position="38"/>
    </location>
</feature>
<feature type="helix" evidence="10">
    <location>
        <begin position="39"/>
        <end position="41"/>
    </location>
</feature>
<feature type="strand" evidence="10">
    <location>
        <begin position="42"/>
        <end position="47"/>
    </location>
</feature>
<feature type="helix" evidence="10">
    <location>
        <begin position="48"/>
        <end position="52"/>
    </location>
</feature>
<feature type="strand" evidence="10">
    <location>
        <begin position="62"/>
        <end position="68"/>
    </location>
</feature>
<feature type="turn" evidence="10">
    <location>
        <begin position="70"/>
        <end position="72"/>
    </location>
</feature>
<feature type="helix" evidence="10">
    <location>
        <begin position="98"/>
        <end position="113"/>
    </location>
</feature>
<feature type="helix" evidence="10">
    <location>
        <begin position="114"/>
        <end position="116"/>
    </location>
</feature>
<feature type="strand" evidence="10">
    <location>
        <begin position="117"/>
        <end position="119"/>
    </location>
</feature>
<feature type="strand" evidence="10">
    <location>
        <begin position="121"/>
        <end position="126"/>
    </location>
</feature>
<feature type="strand" evidence="10">
    <location>
        <begin position="135"/>
        <end position="147"/>
    </location>
</feature>
<feature type="turn" evidence="10">
    <location>
        <begin position="148"/>
        <end position="151"/>
    </location>
</feature>
<feature type="strand" evidence="10">
    <location>
        <begin position="152"/>
        <end position="160"/>
    </location>
</feature>
<feature type="strand" evidence="10">
    <location>
        <begin position="166"/>
        <end position="169"/>
    </location>
</feature>
<feature type="helix" evidence="10">
    <location>
        <begin position="171"/>
        <end position="184"/>
    </location>
</feature>
<feature type="turn" evidence="10">
    <location>
        <begin position="185"/>
        <end position="187"/>
    </location>
</feature>
<feature type="helix" evidence="10">
    <location>
        <begin position="188"/>
        <end position="205"/>
    </location>
</feature>
<feature type="helix" evidence="10">
    <location>
        <begin position="216"/>
        <end position="224"/>
    </location>
</feature>
<feature type="helix" evidence="10">
    <location>
        <begin position="228"/>
        <end position="230"/>
    </location>
</feature>
<feature type="helix" evidence="10">
    <location>
        <begin position="236"/>
        <end position="252"/>
    </location>
</feature>
<feature type="strand" evidence="10">
    <location>
        <begin position="262"/>
        <end position="265"/>
    </location>
</feature>
<feature type="helix" evidence="10">
    <location>
        <begin position="275"/>
        <end position="289"/>
    </location>
</feature>
<sequence>MNFSEQQLINWSRPVSTTEDLKCQNAITQITAALRAKFGNRVTIFLQGSYRNNTNVRQNSDVDIVMRYDDAFYPDLQRLSESDKAIYNAQRTYSGYNFDELKADTEEALRNVFTTSVERKNKCIQVNGNSNRITADVIPCFVLKRFSTLQSVEAEGIKFYSDDNKEIISFPEQHYSNGTEKTNQTYRLYKRMVRILKVVNYRLIDDGEIADNLVSSFFIECLVYNVPNNQFISGNYTQTLRNVIVKIYEDMKNNADYTEVNRLFWLFSNRSPRTRQDALGFMQKCWNYLGYQ</sequence>
<protein>
    <recommendedName>
        <fullName evidence="5">Cyclic dipurine nucleotide synthase</fullName>
        <ecNumber evidence="1">2.7.7.-</ecNumber>
    </recommendedName>
    <alternativeName>
        <fullName evidence="5">Cyclic GMP-AMP synthase</fullName>
        <shortName evidence="5">cGAMP synthase</shortName>
    </alternativeName>
    <alternativeName>
        <fullName evidence="5">c-di-AMP synthase</fullName>
        <ecNumber evidence="1">2.7.7.85</ecNumber>
    </alternativeName>
    <alternativeName>
        <fullName evidence="5">c-di-GMP synthase</fullName>
        <ecNumber evidence="1">2.7.7.65</ecNumber>
    </alternativeName>
    <alternativeName>
        <fullName evidence="2">cGAS/DncV-like nucleotidyltransferase</fullName>
        <shortName evidence="2">CD-NTase</shortName>
        <shortName evidence="2">Em-CdnE</shortName>
    </alternativeName>
</protein>
<proteinExistence type="evidence at protein level"/>
<keyword id="KW-0002">3D-structure</keyword>
<keyword id="KW-0051">Antiviral defense</keyword>
<keyword id="KW-0067">ATP-binding</keyword>
<keyword id="KW-0342">GTP-binding</keyword>
<keyword id="KW-0460">Magnesium</keyword>
<keyword id="KW-0479">Metal-binding</keyword>
<keyword id="KW-0546">Nucleotide metabolism</keyword>
<keyword id="KW-0547">Nucleotide-binding</keyword>
<keyword id="KW-0548">Nucleotidyltransferase</keyword>
<keyword id="KW-0808">Transferase</keyword>
<evidence type="ECO:0000269" key="1">
    <source>
    </source>
</evidence>
<evidence type="ECO:0000303" key="2">
    <source>
    </source>
</evidence>
<evidence type="ECO:0000303" key="3">
    <source>
    </source>
</evidence>
<evidence type="ECO:0000305" key="4"/>
<evidence type="ECO:0000305" key="5">
    <source>
    </source>
</evidence>
<evidence type="ECO:0000312" key="6">
    <source>
        <dbReference type="EMBL" id="SQG05247.1"/>
    </source>
</evidence>
<evidence type="ECO:0000312" key="7">
    <source>
        <dbReference type="PDB" id="6E0M"/>
    </source>
</evidence>
<evidence type="ECO:0000312" key="8">
    <source>
        <dbReference type="PDB" id="6E0N"/>
    </source>
</evidence>
<evidence type="ECO:0000312" key="9">
    <source>
        <dbReference type="PDB" id="6E0O"/>
    </source>
</evidence>
<evidence type="ECO:0007829" key="10">
    <source>
        <dbReference type="PDB" id="6E0N"/>
    </source>
</evidence>
<name>CDNE_ELIME</name>
<organism>
    <name type="scientific">Elizabethkingia meningoseptica</name>
    <name type="common">Chryseobacterium meningosepticum</name>
    <dbReference type="NCBI Taxonomy" id="238"/>
    <lineage>
        <taxon>Bacteria</taxon>
        <taxon>Pseudomonadati</taxon>
        <taxon>Bacteroidota</taxon>
        <taxon>Flavobacteriia</taxon>
        <taxon>Flavobacteriales</taxon>
        <taxon>Weeksellaceae</taxon>
        <taxon>Elizabethkingia</taxon>
    </lineage>
</organism>
<accession>P0DSP2</accession>
<gene>
    <name evidence="2" type="primary">cdnE01</name>
    <name evidence="6" type="ORF">NCTC10016_00133</name>
</gene>
<dbReference type="EC" id="2.7.7.-" evidence="1"/>
<dbReference type="EC" id="2.7.7.85" evidence="1"/>
<dbReference type="EC" id="2.7.7.65" evidence="1"/>
<dbReference type="EMBL" id="LS483376">
    <property type="protein sequence ID" value="SQG05247.1"/>
    <property type="molecule type" value="Genomic_DNA"/>
</dbReference>
<dbReference type="RefSeq" id="WP_016200549.1">
    <property type="nucleotide sequence ID" value="NZ_MAHZ01000011.1"/>
</dbReference>
<dbReference type="PDB" id="6E0M">
    <property type="method" value="X-ray"/>
    <property type="resolution" value="1.52 A"/>
    <property type="chains" value="A=1-292"/>
</dbReference>
<dbReference type="PDB" id="6E0N">
    <property type="method" value="X-ray"/>
    <property type="resolution" value="1.50 A"/>
    <property type="chains" value="A=1-292"/>
</dbReference>
<dbReference type="PDB" id="6E0O">
    <property type="method" value="X-ray"/>
    <property type="resolution" value="1.25 A"/>
    <property type="chains" value="A=1-292"/>
</dbReference>
<dbReference type="PDBsum" id="6E0M"/>
<dbReference type="PDBsum" id="6E0N"/>
<dbReference type="PDBsum" id="6E0O"/>
<dbReference type="SMR" id="P0DSP2"/>
<dbReference type="GeneID" id="48542392"/>
<dbReference type="KEGG" id="emg:BBD33_11290"/>
<dbReference type="GO" id="GO:0140701">
    <property type="term" value="F:3',3'-cyclic GMP-AMP synthase activity"/>
    <property type="evidence" value="ECO:0000314"/>
    <property type="project" value="UniProtKB"/>
</dbReference>
<dbReference type="GO" id="GO:0005524">
    <property type="term" value="F:ATP binding"/>
    <property type="evidence" value="ECO:0007669"/>
    <property type="project" value="UniProtKB-KW"/>
</dbReference>
<dbReference type="GO" id="GO:0106408">
    <property type="term" value="F:diadenylate cyclase activity"/>
    <property type="evidence" value="ECO:0007669"/>
    <property type="project" value="UniProtKB-EC"/>
</dbReference>
<dbReference type="GO" id="GO:0052621">
    <property type="term" value="F:diguanylate cyclase activity"/>
    <property type="evidence" value="ECO:0007669"/>
    <property type="project" value="UniProtKB-EC"/>
</dbReference>
<dbReference type="GO" id="GO:0005525">
    <property type="term" value="F:GTP binding"/>
    <property type="evidence" value="ECO:0007669"/>
    <property type="project" value="UniProtKB-KW"/>
</dbReference>
<dbReference type="GO" id="GO:0046872">
    <property type="term" value="F:metal ion binding"/>
    <property type="evidence" value="ECO:0007669"/>
    <property type="project" value="UniProtKB-KW"/>
</dbReference>
<dbReference type="GO" id="GO:0051607">
    <property type="term" value="P:defense response to virus"/>
    <property type="evidence" value="ECO:0007669"/>
    <property type="project" value="UniProtKB-KW"/>
</dbReference>
<dbReference type="GO" id="GO:0009117">
    <property type="term" value="P:nucleotide metabolic process"/>
    <property type="evidence" value="ECO:0007669"/>
    <property type="project" value="UniProtKB-KW"/>
</dbReference>
<dbReference type="CDD" id="cd05400">
    <property type="entry name" value="NT_2-5OAS_ClassI-CCAase"/>
    <property type="match status" value="1"/>
</dbReference>
<dbReference type="Gene3D" id="3.30.460.10">
    <property type="entry name" value="Beta Polymerase, domain 2"/>
    <property type="match status" value="1"/>
</dbReference>
<dbReference type="InterPro" id="IPR006116">
    <property type="entry name" value="NT_2-5OAS_ClassI-CCAase"/>
</dbReference>
<dbReference type="InterPro" id="IPR043519">
    <property type="entry name" value="NT_sf"/>
</dbReference>
<dbReference type="Pfam" id="PF18144">
    <property type="entry name" value="SMODS"/>
    <property type="match status" value="1"/>
</dbReference>
<dbReference type="SUPFAM" id="SSF81301">
    <property type="entry name" value="Nucleotidyltransferase"/>
    <property type="match status" value="1"/>
</dbReference>
<comment type="function">
    <text evidence="1 3 4">Cyclic nucleotide synthase (second messenger synthase) of a CBASS antivirus system (PubMed:30787435). CBASS (cyclic oligonucleotide-based antiphage signaling system) provides immunity against bacteriophage. The CD-NTase protein synthesizes cyclic nucleotides in response to infection; these serve as specific second messenger signals. The signals activate a diverse range of effectors, leading to bacterial cell death and thus abortive phage infection. A type I-A(GA) CBASS system (PubMed:32839535).</text>
</comment>
<comment type="function">
    <text evidence="1">Cyclic dinucleotide synthase that catalyzes the synthesis of 3'3'-cyclic GMP-AMP (cGAMP) from GTP and ATP, and of c-di-AMP and c-di-GMP, that are second messengers for cell signal transduction.</text>
</comment>
<comment type="catalytic activity">
    <reaction evidence="1">
        <text>2 ATP = 3',3'-c-di-AMP + 2 diphosphate</text>
        <dbReference type="Rhea" id="RHEA:35655"/>
        <dbReference type="ChEBI" id="CHEBI:30616"/>
        <dbReference type="ChEBI" id="CHEBI:33019"/>
        <dbReference type="ChEBI" id="CHEBI:71500"/>
        <dbReference type="EC" id="2.7.7.85"/>
    </reaction>
    <physiologicalReaction direction="left-to-right" evidence="5">
        <dbReference type="Rhea" id="RHEA:35656"/>
    </physiologicalReaction>
</comment>
<comment type="catalytic activity">
    <reaction evidence="1">
        <text>2 GTP = 3',3'-c-di-GMP + 2 diphosphate</text>
        <dbReference type="Rhea" id="RHEA:24898"/>
        <dbReference type="ChEBI" id="CHEBI:33019"/>
        <dbReference type="ChEBI" id="CHEBI:37565"/>
        <dbReference type="ChEBI" id="CHEBI:58805"/>
        <dbReference type="EC" id="2.7.7.65"/>
    </reaction>
    <physiologicalReaction direction="left-to-right" evidence="5">
        <dbReference type="Rhea" id="RHEA:24899"/>
    </physiologicalReaction>
</comment>
<comment type="catalytic activity">
    <reaction evidence="1">
        <text>GTP + ATP = 3',3'-cGAMP + 2 diphosphate</text>
        <dbReference type="Rhea" id="RHEA:35647"/>
        <dbReference type="ChEBI" id="CHEBI:30616"/>
        <dbReference type="ChEBI" id="CHEBI:33019"/>
        <dbReference type="ChEBI" id="CHEBI:37565"/>
        <dbReference type="ChEBI" id="CHEBI:71501"/>
    </reaction>
    <physiologicalReaction direction="left-to-right" evidence="5">
        <dbReference type="Rhea" id="RHEA:35648"/>
    </physiologicalReaction>
</comment>
<comment type="cofactor">
    <cofactor evidence="1">
        <name>Mg(2+)</name>
        <dbReference type="ChEBI" id="CHEBI:18420"/>
    </cofactor>
    <text evidence="1">Binds 1 Mg(2+) ion per subunit.</text>
</comment>
<comment type="similarity">
    <text evidence="5">Belongs to the CD-NTase family. E01 subfamily.</text>
</comment>
<reference key="1">
    <citation type="submission" date="2018-06" db="EMBL/GenBank/DDBJ databases">
        <authorList>
            <consortium name="Pathogen Informatics"/>
            <person name="Doyle S."/>
        </authorList>
    </citation>
    <scope>NUCLEOTIDE SEQUENCE [GENOMIC DNA]</scope>
    <source>
        <strain>ATCC 13253 / DSM 2800 / CCUG 214 / CIP 60.57 / LMG 12279 / NBRC 12535 / NCTC 100 / 1416</strain>
    </source>
</reference>
<reference key="2">
    <citation type="journal article" date="2020" name="Nat. Microbiol.">
        <title>Diversity and classification of cyclic-oligonucleotide-based anti-phage signalling systems.</title>
        <authorList>
            <person name="Millman A."/>
            <person name="Melamed S."/>
            <person name="Amitai G."/>
            <person name="Sorek R."/>
        </authorList>
    </citation>
    <scope>CLASSIFICATION AND NOMENCLATURE</scope>
</reference>
<reference evidence="7 8 9" key="3">
    <citation type="journal article" date="2019" name="Nature">
        <title>Bacterial cGAS-like enzymes synthesize diverse nucleotide signals.</title>
        <authorList>
            <person name="Whiteley A.T."/>
            <person name="Eaglesham J.B."/>
            <person name="de Oliveira Mann C.C."/>
            <person name="Morehouse B.R."/>
            <person name="Lowey B."/>
            <person name="Nieminen E.A."/>
            <person name="Danilchanka O."/>
            <person name="King D.S."/>
            <person name="Lee A.S.Y."/>
            <person name="Mekalanos J.J."/>
            <person name="Kranzusch P.J."/>
        </authorList>
    </citation>
    <scope>X-RAY CRYSTALLOGRAPHY (1.25 ANGSTROMS) IN COMPLEXES WITH GTP; NON-HYDROLYSABLE ATP AND MAGNESIUM</scope>
    <scope>FUNCTION</scope>
    <scope>CATALYTIC ACTIVITY</scope>
    <scope>COFACTOR</scope>
    <scope>NOMENCLATURE</scope>
    <scope>SIMILARITY</scope>
    <scope>MUTAGENESIS OF SER-169</scope>
    <source>
        <strain>ATCC 13253 / DSM 2800 / CCUG 214 / CIP 60.57 / LMG 12279 / NBRC 12535 / NCTC 100 / 1416</strain>
    </source>
</reference>